<comment type="function">
    <text evidence="2">This virulence factor of S.pyogenes specifically cleaves the human serum chemotaxin C5a at '68-Lys-|-Asp-69' bond near its C-terminus, destroying its ability to serve as a chemoattractant.</text>
</comment>
<comment type="catalytic activity">
    <reaction evidence="2">
        <text>The primary cleavage site is at 67-His-|-Lys-68 in human C5a with a minor secondary cleavage site at 58-Ala-|-Ser-59.</text>
        <dbReference type="EC" id="3.4.21.110"/>
    </reaction>
</comment>
<comment type="subcellular location">
    <subcellularLocation>
        <location evidence="4">Secreted</location>
        <location evidence="4">Cell wall</location>
        <topology evidence="4">Peptidoglycan-anchor</topology>
    </subcellularLocation>
</comment>
<comment type="PTM">
    <text evidence="3">Cleaved by SpeB protease; leading to its degradation. Degradation by SpeB is probably strictly regulated to preserve integrity of C5a peptidase.</text>
</comment>
<comment type="similarity">
    <text evidence="7">Belongs to the peptidase S8 family.</text>
</comment>
<sequence>MRKKQKLPFDKLAIALMSTSILLNAQSDIKANTVTEDTPAAEQAVETPQPTAVSEEVPSSKETKTPQTPDNAEETVADKANDLALQAPAKTADTPATSKATIRDLNDPSQVKTLQEKAGKGAGTVVAVIDAGFDKNHEAWRLTDKTKARYQSKEDLEKAKKEHGITYGEWVNDKVAYYHDYSKDGKTAVDQEHGTHVSGILSGNAPSETKEPYRLEGAMPEAQLLLMRVEIVNGLADYARNYAQAIRDAVNLGAKVINMSFGNAALAYANLPDETKKAFDYAKSKGVSIVTSAGNDSSFGGKTRLPLADHPDYGVVGTPAAADSTLTVASYSPDKQLTETATVKTADQQDKEMPVLSTNRFEPNKAYDYAYANRGMKEDDFKDVKGKIALIERGDIDFKDKIANAKKAGAVGVLIYDNQDKGFPIELPNVDQMPAAFISRKDGLLLKENPQKTITFNATPKVLPTASGTKLSRFSSWGLTADGNIKPDIAAPGQDILSSVANNKYAKLSGTSMSAPLVAGIMGLLQKQYEIQYPDMTPSERLDLAKKVLMSSATALYDEDEKAYFSPRQQGAGAVDAKKASAATMYVTDKDNTSSKVHLNNVSDKFEVTVTVHNKSDKPQELYYQATVQTDKVDGKHFALAPKALYETSWQKITIPANSSKQVTVPIDASRFSKDLLAQMKNGYFLEGFVRFKQDPKKEELMSIPYIGFRGDFGNLSALEKPIYDSKDGSSYYHEANSDAKDQLDGDGLQFYALKNNFTALTTESNPWTIIKAVKEGVENIEDIESSEITETIFAGTFAKQDDDSHYYIHRHANGKPYAAISPNGDGNRDYVQFQGTFLRNAKNLVAEVLDKEGNVVWTSEVTEQVVKNYNNDLASTLGSTRFEKTRWDGKDKDGKVVANGTYTYRVRYTPISSGAKEQHTDFDVIVDNTTLEVATSATFSTEDRRLTLASKPKTSQPIYRERIAYTYMDEDLPTTEYISPNEDGTFTLPEEAETMEGATVPLKMSDFTYVVEDMAGNITYTPVTKLLEGHSNKPEQDGSDQAPDKKPEAKPEQDGSGQTPDKKPETKPEKDSSGQTPGKTPQKGQPSRTLEKRSSKRALATKASARDQLPTTNDKDTNRLHLLKLVMTTFFFGLVAHIFKTKRQKETKK</sequence>
<evidence type="ECO:0000250" key="1"/>
<evidence type="ECO:0000250" key="2">
    <source>
        <dbReference type="UniProtKB" id="P15926"/>
    </source>
</evidence>
<evidence type="ECO:0000250" key="3">
    <source>
        <dbReference type="UniProtKB" id="P58099"/>
    </source>
</evidence>
<evidence type="ECO:0000255" key="4">
    <source>
        <dbReference type="PROSITE-ProRule" id="PRU00477"/>
    </source>
</evidence>
<evidence type="ECO:0000255" key="5">
    <source>
        <dbReference type="PROSITE-ProRule" id="PRU01240"/>
    </source>
</evidence>
<evidence type="ECO:0000256" key="6">
    <source>
        <dbReference type="SAM" id="MobiDB-lite"/>
    </source>
</evidence>
<evidence type="ECO:0000305" key="7"/>
<keyword id="KW-0134">Cell wall</keyword>
<keyword id="KW-0378">Hydrolase</keyword>
<keyword id="KW-0572">Peptidoglycan-anchor</keyword>
<keyword id="KW-0645">Protease</keyword>
<keyword id="KW-0677">Repeat</keyword>
<keyword id="KW-0964">Secreted</keyword>
<keyword id="KW-0720">Serine protease</keyword>
<keyword id="KW-0732">Signal</keyword>
<keyword id="KW-0843">Virulence</keyword>
<dbReference type="EC" id="3.4.21.110" evidence="2"/>
<dbReference type="EMBL" id="AE009949">
    <property type="protein sequence ID" value="AAL98545.1"/>
    <property type="molecule type" value="Genomic_DNA"/>
</dbReference>
<dbReference type="SMR" id="Q8NZ80"/>
<dbReference type="MEROPS" id="S08.020"/>
<dbReference type="KEGG" id="spm:spyM18_2074"/>
<dbReference type="HOGENOM" id="CLU_001768_3_0_9"/>
<dbReference type="GO" id="GO:0005576">
    <property type="term" value="C:extracellular region"/>
    <property type="evidence" value="ECO:0007669"/>
    <property type="project" value="UniProtKB-KW"/>
</dbReference>
<dbReference type="GO" id="GO:0016020">
    <property type="term" value="C:membrane"/>
    <property type="evidence" value="ECO:0007669"/>
    <property type="project" value="InterPro"/>
</dbReference>
<dbReference type="GO" id="GO:0004252">
    <property type="term" value="F:serine-type endopeptidase activity"/>
    <property type="evidence" value="ECO:0007669"/>
    <property type="project" value="InterPro"/>
</dbReference>
<dbReference type="GO" id="GO:0006508">
    <property type="term" value="P:proteolysis"/>
    <property type="evidence" value="ECO:0007669"/>
    <property type="project" value="UniProtKB-KW"/>
</dbReference>
<dbReference type="CDD" id="cd02133">
    <property type="entry name" value="PA_C5a_like"/>
    <property type="match status" value="1"/>
</dbReference>
<dbReference type="CDD" id="cd07475">
    <property type="entry name" value="Peptidases_S8_C5a_Peptidase"/>
    <property type="match status" value="1"/>
</dbReference>
<dbReference type="Gene3D" id="2.60.40.4070">
    <property type="match status" value="1"/>
</dbReference>
<dbReference type="Gene3D" id="3.50.30.30">
    <property type="match status" value="1"/>
</dbReference>
<dbReference type="Gene3D" id="2.60.40.10">
    <property type="entry name" value="Immunoglobulins"/>
    <property type="match status" value="1"/>
</dbReference>
<dbReference type="Gene3D" id="3.40.50.200">
    <property type="entry name" value="Peptidase S8/S53 domain"/>
    <property type="match status" value="1"/>
</dbReference>
<dbReference type="Gene3D" id="2.60.40.1710">
    <property type="entry name" value="Subtilisin-like superfamily"/>
    <property type="match status" value="1"/>
</dbReference>
<dbReference type="InterPro" id="IPR010435">
    <property type="entry name" value="C5a/SBT2-like_Fn3"/>
</dbReference>
<dbReference type="InterPro" id="IPR034216">
    <property type="entry name" value="C5a_Peptidase"/>
</dbReference>
<dbReference type="InterPro" id="IPR013783">
    <property type="entry name" value="Ig-like_fold"/>
</dbReference>
<dbReference type="InterPro" id="IPR019931">
    <property type="entry name" value="LPXTG_anchor"/>
</dbReference>
<dbReference type="InterPro" id="IPR046450">
    <property type="entry name" value="PA_dom_sf"/>
</dbReference>
<dbReference type="InterPro" id="IPR003137">
    <property type="entry name" value="PA_domain"/>
</dbReference>
<dbReference type="InterPro" id="IPR000209">
    <property type="entry name" value="Peptidase_S8/S53_dom"/>
</dbReference>
<dbReference type="InterPro" id="IPR036852">
    <property type="entry name" value="Peptidase_S8/S53_dom_sf"/>
</dbReference>
<dbReference type="InterPro" id="IPR023827">
    <property type="entry name" value="Peptidase_S8_Asp-AS"/>
</dbReference>
<dbReference type="InterPro" id="IPR022398">
    <property type="entry name" value="Peptidase_S8_His-AS"/>
</dbReference>
<dbReference type="InterPro" id="IPR023828">
    <property type="entry name" value="Peptidase_S8_Ser-AS"/>
</dbReference>
<dbReference type="InterPro" id="IPR050131">
    <property type="entry name" value="Peptidase_S8_subtilisin-like"/>
</dbReference>
<dbReference type="InterPro" id="IPR015500">
    <property type="entry name" value="Peptidase_S8_subtilisin-rel"/>
</dbReference>
<dbReference type="InterPro" id="IPR053869">
    <property type="entry name" value="ScpA_Fn3_3rd"/>
</dbReference>
<dbReference type="PANTHER" id="PTHR43806:SF11">
    <property type="entry name" value="CEREVISIN-RELATED"/>
    <property type="match status" value="1"/>
</dbReference>
<dbReference type="PANTHER" id="PTHR43806">
    <property type="entry name" value="PEPTIDASE S8"/>
    <property type="match status" value="1"/>
</dbReference>
<dbReference type="Pfam" id="PF13585">
    <property type="entry name" value="CHU_C"/>
    <property type="match status" value="1"/>
</dbReference>
<dbReference type="Pfam" id="PF06280">
    <property type="entry name" value="fn3_5"/>
    <property type="match status" value="1"/>
</dbReference>
<dbReference type="Pfam" id="PF02225">
    <property type="entry name" value="PA"/>
    <property type="match status" value="1"/>
</dbReference>
<dbReference type="Pfam" id="PF00082">
    <property type="entry name" value="Peptidase_S8"/>
    <property type="match status" value="1"/>
</dbReference>
<dbReference type="Pfam" id="PF22143">
    <property type="entry name" value="ScpA_C"/>
    <property type="match status" value="1"/>
</dbReference>
<dbReference type="PRINTS" id="PR00723">
    <property type="entry name" value="SUBTILISIN"/>
</dbReference>
<dbReference type="SUPFAM" id="SSF52025">
    <property type="entry name" value="PA domain"/>
    <property type="match status" value="1"/>
</dbReference>
<dbReference type="SUPFAM" id="SSF52743">
    <property type="entry name" value="Subtilisin-like"/>
    <property type="match status" value="1"/>
</dbReference>
<dbReference type="PROSITE" id="PS50847">
    <property type="entry name" value="GRAM_POS_ANCHORING"/>
    <property type="match status" value="1"/>
</dbReference>
<dbReference type="PROSITE" id="PS51892">
    <property type="entry name" value="SUBTILASE"/>
    <property type="match status" value="1"/>
</dbReference>
<dbReference type="PROSITE" id="PS00136">
    <property type="entry name" value="SUBTILASE_ASP"/>
    <property type="match status" value="1"/>
</dbReference>
<dbReference type="PROSITE" id="PS00137">
    <property type="entry name" value="SUBTILASE_HIS"/>
    <property type="match status" value="1"/>
</dbReference>
<dbReference type="PROSITE" id="PS00138">
    <property type="entry name" value="SUBTILASE_SER"/>
    <property type="match status" value="1"/>
</dbReference>
<gene>
    <name type="primary">scpA</name>
    <name type="ordered locus">spyM18_2074</name>
</gene>
<reference key="1">
    <citation type="journal article" date="2002" name="Proc. Natl. Acad. Sci. U.S.A.">
        <title>Genome sequence and comparative microarray analysis of serotype M18 group A Streptococcus strains associated with acute rheumatic fever outbreaks.</title>
        <authorList>
            <person name="Smoot J.C."/>
            <person name="Barbian K.D."/>
            <person name="Van Gompel J.J."/>
            <person name="Smoot L.M."/>
            <person name="Chaussee M.S."/>
            <person name="Sylva G.L."/>
            <person name="Sturdevant D.E."/>
            <person name="Ricklefs S.M."/>
            <person name="Porcella S.F."/>
            <person name="Parkins L.D."/>
            <person name="Beres S.B."/>
            <person name="Campbell D.S."/>
            <person name="Smith T.M."/>
            <person name="Zhang Q."/>
            <person name="Kapur V."/>
            <person name="Daly J.A."/>
            <person name="Veasy L.G."/>
            <person name="Musser J.M."/>
        </authorList>
    </citation>
    <scope>NUCLEOTIDE SEQUENCE [LARGE SCALE GENOMIC DNA]</scope>
    <source>
        <strain>MGAS8232</strain>
    </source>
</reference>
<accession>Q8NZ80</accession>
<protein>
    <recommendedName>
        <fullName>C5a peptidase</fullName>
        <ecNumber evidence="2">3.4.21.110</ecNumber>
    </recommendedName>
    <alternativeName>
        <fullName>SCP</fullName>
    </alternativeName>
</protein>
<feature type="signal peptide" evidence="2">
    <location>
        <begin position="1"/>
        <end position="31"/>
    </location>
</feature>
<feature type="chain" id="PRO_0000027159" description="C5a peptidase" evidence="1">
    <location>
        <begin position="32"/>
        <end position="1113"/>
    </location>
</feature>
<feature type="propeptide" id="PRO_0000027160" description="Removed by sortase" evidence="4">
    <location>
        <begin position="1114"/>
        <end position="1150"/>
    </location>
</feature>
<feature type="domain" description="Peptidase S8" evidence="5">
    <location>
        <begin position="99"/>
        <end position="581"/>
    </location>
</feature>
<feature type="repeat" description="1">
    <location>
        <begin position="1034"/>
        <end position="1050"/>
    </location>
</feature>
<feature type="repeat" description="2">
    <location>
        <begin position="1051"/>
        <end position="1067"/>
    </location>
</feature>
<feature type="repeat" description="3">
    <location>
        <begin position="1068"/>
        <end position="1084"/>
    </location>
</feature>
<feature type="region of interest" description="Disordered" evidence="6">
    <location>
        <begin position="33"/>
        <end position="73"/>
    </location>
</feature>
<feature type="region of interest" description="Disordered" evidence="6">
    <location>
        <begin position="1029"/>
        <end position="1116"/>
    </location>
</feature>
<feature type="region of interest" description="3 X 17 AA tandem repeats">
    <location>
        <begin position="1034"/>
        <end position="1084"/>
    </location>
</feature>
<feature type="short sequence motif" description="LPXTG sorting signal" evidence="4">
    <location>
        <begin position="1110"/>
        <end position="1114"/>
    </location>
</feature>
<feature type="compositionally biased region" description="Basic and acidic residues" evidence="6">
    <location>
        <begin position="1029"/>
        <end position="1054"/>
    </location>
</feature>
<feature type="compositionally biased region" description="Basic and acidic residues" evidence="6">
    <location>
        <begin position="1061"/>
        <end position="1073"/>
    </location>
</feature>
<feature type="compositionally biased region" description="Polar residues" evidence="6">
    <location>
        <begin position="1075"/>
        <end position="1089"/>
    </location>
</feature>
<feature type="active site" description="Charge relay system" evidence="5">
    <location>
        <position position="130"/>
    </location>
</feature>
<feature type="active site" description="Charge relay system" evidence="5">
    <location>
        <position position="193"/>
    </location>
</feature>
<feature type="active site" description="Charge relay system" evidence="5">
    <location>
        <position position="512"/>
    </location>
</feature>
<feature type="modified residue" description="Pentaglycyl murein peptidoglycan amidated threonine" evidence="4">
    <location>
        <position position="1113"/>
    </location>
</feature>
<proteinExistence type="inferred from homology"/>
<organism>
    <name type="scientific">Streptococcus pyogenes serotype M18 (strain MGAS8232)</name>
    <dbReference type="NCBI Taxonomy" id="186103"/>
    <lineage>
        <taxon>Bacteria</taxon>
        <taxon>Bacillati</taxon>
        <taxon>Bacillota</taxon>
        <taxon>Bacilli</taxon>
        <taxon>Lactobacillales</taxon>
        <taxon>Streptococcaceae</taxon>
        <taxon>Streptococcus</taxon>
    </lineage>
</organism>
<name>C5AP_STRP8</name>